<gene>
    <name evidence="1" type="primary">asnS</name>
    <name type="ordered locus">SA1287</name>
</gene>
<feature type="chain" id="PRO_0000176449" description="Asparagine--tRNA ligase">
    <location>
        <begin position="1"/>
        <end position="430"/>
    </location>
</feature>
<keyword id="KW-0030">Aminoacyl-tRNA synthetase</keyword>
<keyword id="KW-0067">ATP-binding</keyword>
<keyword id="KW-0963">Cytoplasm</keyword>
<keyword id="KW-0436">Ligase</keyword>
<keyword id="KW-0547">Nucleotide-binding</keyword>
<keyword id="KW-0648">Protein biosynthesis</keyword>
<protein>
    <recommendedName>
        <fullName evidence="1">Asparagine--tRNA ligase</fullName>
        <ecNumber evidence="1">6.1.1.22</ecNumber>
    </recommendedName>
    <alternativeName>
        <fullName evidence="1">Asparaginyl-tRNA synthetase</fullName>
        <shortName evidence="1">AsnRS</shortName>
    </alternativeName>
</protein>
<dbReference type="EC" id="6.1.1.22" evidence="1"/>
<dbReference type="EMBL" id="BA000018">
    <property type="protein sequence ID" value="BAB42547.1"/>
    <property type="molecule type" value="Genomic_DNA"/>
</dbReference>
<dbReference type="PIR" id="F89923">
    <property type="entry name" value="F89923"/>
</dbReference>
<dbReference type="RefSeq" id="WP_000858779.1">
    <property type="nucleotide sequence ID" value="NC_002745.2"/>
</dbReference>
<dbReference type="SMR" id="P67572"/>
<dbReference type="EnsemblBacteria" id="BAB42547">
    <property type="protein sequence ID" value="BAB42547"/>
    <property type="gene ID" value="BAB42547"/>
</dbReference>
<dbReference type="KEGG" id="sau:SA1287"/>
<dbReference type="HOGENOM" id="CLU_004553_2_0_9"/>
<dbReference type="GO" id="GO:0005737">
    <property type="term" value="C:cytoplasm"/>
    <property type="evidence" value="ECO:0007669"/>
    <property type="project" value="UniProtKB-SubCell"/>
</dbReference>
<dbReference type="GO" id="GO:0004816">
    <property type="term" value="F:asparagine-tRNA ligase activity"/>
    <property type="evidence" value="ECO:0007669"/>
    <property type="project" value="UniProtKB-UniRule"/>
</dbReference>
<dbReference type="GO" id="GO:0005524">
    <property type="term" value="F:ATP binding"/>
    <property type="evidence" value="ECO:0007669"/>
    <property type="project" value="UniProtKB-UniRule"/>
</dbReference>
<dbReference type="GO" id="GO:0140096">
    <property type="term" value="F:catalytic activity, acting on a protein"/>
    <property type="evidence" value="ECO:0007669"/>
    <property type="project" value="UniProtKB-ARBA"/>
</dbReference>
<dbReference type="GO" id="GO:0003676">
    <property type="term" value="F:nucleic acid binding"/>
    <property type="evidence" value="ECO:0007669"/>
    <property type="project" value="InterPro"/>
</dbReference>
<dbReference type="GO" id="GO:0016740">
    <property type="term" value="F:transferase activity"/>
    <property type="evidence" value="ECO:0007669"/>
    <property type="project" value="UniProtKB-ARBA"/>
</dbReference>
<dbReference type="GO" id="GO:0006421">
    <property type="term" value="P:asparaginyl-tRNA aminoacylation"/>
    <property type="evidence" value="ECO:0007669"/>
    <property type="project" value="UniProtKB-UniRule"/>
</dbReference>
<dbReference type="CDD" id="cd04323">
    <property type="entry name" value="AsnRS_cyto_like_N"/>
    <property type="match status" value="1"/>
</dbReference>
<dbReference type="CDD" id="cd00776">
    <property type="entry name" value="AsxRS_core"/>
    <property type="match status" value="1"/>
</dbReference>
<dbReference type="Gene3D" id="3.30.930.10">
    <property type="entry name" value="Bira Bifunctional Protein, Domain 2"/>
    <property type="match status" value="1"/>
</dbReference>
<dbReference type="Gene3D" id="2.40.50.140">
    <property type="entry name" value="Nucleic acid-binding proteins"/>
    <property type="match status" value="1"/>
</dbReference>
<dbReference type="HAMAP" id="MF_00534">
    <property type="entry name" value="Asn_tRNA_synth"/>
    <property type="match status" value="1"/>
</dbReference>
<dbReference type="InterPro" id="IPR004364">
    <property type="entry name" value="Aa-tRNA-synt_II"/>
</dbReference>
<dbReference type="InterPro" id="IPR006195">
    <property type="entry name" value="aa-tRNA-synth_II"/>
</dbReference>
<dbReference type="InterPro" id="IPR045864">
    <property type="entry name" value="aa-tRNA-synth_II/BPL/LPL"/>
</dbReference>
<dbReference type="InterPro" id="IPR004522">
    <property type="entry name" value="Asn-tRNA-ligase"/>
</dbReference>
<dbReference type="InterPro" id="IPR002312">
    <property type="entry name" value="Asp/Asn-tRNA-synth_IIb"/>
</dbReference>
<dbReference type="InterPro" id="IPR012340">
    <property type="entry name" value="NA-bd_OB-fold"/>
</dbReference>
<dbReference type="InterPro" id="IPR004365">
    <property type="entry name" value="NA-bd_OB_tRNA"/>
</dbReference>
<dbReference type="NCBIfam" id="TIGR00457">
    <property type="entry name" value="asnS"/>
    <property type="match status" value="1"/>
</dbReference>
<dbReference type="NCBIfam" id="NF003037">
    <property type="entry name" value="PRK03932.1"/>
    <property type="match status" value="1"/>
</dbReference>
<dbReference type="NCBIfam" id="NF003483">
    <property type="entry name" value="PRK05159.1"/>
    <property type="match status" value="1"/>
</dbReference>
<dbReference type="PANTHER" id="PTHR22594:SF34">
    <property type="entry name" value="ASPARAGINE--TRNA LIGASE, MITOCHONDRIAL-RELATED"/>
    <property type="match status" value="1"/>
</dbReference>
<dbReference type="PANTHER" id="PTHR22594">
    <property type="entry name" value="ASPARTYL/LYSYL-TRNA SYNTHETASE"/>
    <property type="match status" value="1"/>
</dbReference>
<dbReference type="Pfam" id="PF00152">
    <property type="entry name" value="tRNA-synt_2"/>
    <property type="match status" value="1"/>
</dbReference>
<dbReference type="Pfam" id="PF01336">
    <property type="entry name" value="tRNA_anti-codon"/>
    <property type="match status" value="1"/>
</dbReference>
<dbReference type="PRINTS" id="PR01042">
    <property type="entry name" value="TRNASYNTHASP"/>
</dbReference>
<dbReference type="SUPFAM" id="SSF55681">
    <property type="entry name" value="Class II aaRS and biotin synthetases"/>
    <property type="match status" value="1"/>
</dbReference>
<dbReference type="SUPFAM" id="SSF50249">
    <property type="entry name" value="Nucleic acid-binding proteins"/>
    <property type="match status" value="1"/>
</dbReference>
<dbReference type="PROSITE" id="PS50862">
    <property type="entry name" value="AA_TRNA_LIGASE_II"/>
    <property type="match status" value="1"/>
</dbReference>
<proteinExistence type="evidence at protein level"/>
<evidence type="ECO:0000255" key="1">
    <source>
        <dbReference type="HAMAP-Rule" id="MF_00534"/>
    </source>
</evidence>
<reference key="1">
    <citation type="journal article" date="2001" name="Lancet">
        <title>Whole genome sequencing of meticillin-resistant Staphylococcus aureus.</title>
        <authorList>
            <person name="Kuroda M."/>
            <person name="Ohta T."/>
            <person name="Uchiyama I."/>
            <person name="Baba T."/>
            <person name="Yuzawa H."/>
            <person name="Kobayashi I."/>
            <person name="Cui L."/>
            <person name="Oguchi A."/>
            <person name="Aoki K."/>
            <person name="Nagai Y."/>
            <person name="Lian J.-Q."/>
            <person name="Ito T."/>
            <person name="Kanamori M."/>
            <person name="Matsumaru H."/>
            <person name="Maruyama A."/>
            <person name="Murakami H."/>
            <person name="Hosoyama A."/>
            <person name="Mizutani-Ui Y."/>
            <person name="Takahashi N.K."/>
            <person name="Sawano T."/>
            <person name="Inoue R."/>
            <person name="Kaito C."/>
            <person name="Sekimizu K."/>
            <person name="Hirakawa H."/>
            <person name="Kuhara S."/>
            <person name="Goto S."/>
            <person name="Yabuzaki J."/>
            <person name="Kanehisa M."/>
            <person name="Yamashita A."/>
            <person name="Oshima K."/>
            <person name="Furuya K."/>
            <person name="Yoshino C."/>
            <person name="Shiba T."/>
            <person name="Hattori M."/>
            <person name="Ogasawara N."/>
            <person name="Hayashi H."/>
            <person name="Hiramatsu K."/>
        </authorList>
    </citation>
    <scope>NUCLEOTIDE SEQUENCE [LARGE SCALE GENOMIC DNA]</scope>
    <source>
        <strain>N315</strain>
    </source>
</reference>
<reference key="2">
    <citation type="submission" date="2005-11" db="UniProtKB">
        <title>Shotgun proteomic analysis of total protein extract of S. aureus S30 versus N315.</title>
        <authorList>
            <person name="Stenz L."/>
        </authorList>
    </citation>
    <scope>IDENTIFICATION BY MASS SPECTROMETRY</scope>
</reference>
<reference key="3">
    <citation type="submission" date="2007-10" db="UniProtKB">
        <title>Shotgun proteomic analysis of total and membrane protein extracts of S. aureus strain N315.</title>
        <authorList>
            <person name="Vaezzadeh A.R."/>
            <person name="Deshusses J."/>
            <person name="Lescuyer P."/>
            <person name="Hochstrasser D.F."/>
        </authorList>
    </citation>
    <scope>IDENTIFICATION BY MASS SPECTROMETRY [LARGE SCALE ANALYSIS]</scope>
    <source>
        <strain>N315</strain>
    </source>
</reference>
<accession>P67572</accession>
<accession>Q99U35</accession>
<organism>
    <name type="scientific">Staphylococcus aureus (strain N315)</name>
    <dbReference type="NCBI Taxonomy" id="158879"/>
    <lineage>
        <taxon>Bacteria</taxon>
        <taxon>Bacillati</taxon>
        <taxon>Bacillota</taxon>
        <taxon>Bacilli</taxon>
        <taxon>Bacillales</taxon>
        <taxon>Staphylococcaceae</taxon>
        <taxon>Staphylococcus</taxon>
    </lineage>
</organism>
<sequence>MKTTIKQAKDHLNQDVTIGAWLTNKRSSGKIAFLQLRDGTGFMQGVVVKSEVDEEVFKLAKEIAQESSLYVTGTITEDNRSDLGYEMQVKSIEVISEAHDYPITPKNHGTEFLMDHRHLWLRSKKQHAVMKIRNEVIRATYEFFNKDGFTKVDPPILTASAPEGTSELFHTKYFDQDAFLSQSGQLYLEAAAMAHGKVFSFGPTFRAEKSKTRRHLIEFWMIEGEMAFTNHAESLEIQEQYVTHVVKSVLENCKLELKILERDTSKLEKVATPFPRISYDDAIEFLKAEGFDDIEWGEDFGAPHETAIANHYDLPVFITNYPTKIKPFYMQPNPENEETVLCADLIAPEGYGEIIGGSERVDDLELLEQRVKEHGLDEEAYSYYLDLRRYGSVPHCGFGLGLERTVAWISGVEHVRETAPFPRLLNRLYP</sequence>
<name>SYN_STAAN</name>
<comment type="catalytic activity">
    <reaction evidence="1">
        <text>tRNA(Asn) + L-asparagine + ATP = L-asparaginyl-tRNA(Asn) + AMP + diphosphate + H(+)</text>
        <dbReference type="Rhea" id="RHEA:11180"/>
        <dbReference type="Rhea" id="RHEA-COMP:9659"/>
        <dbReference type="Rhea" id="RHEA-COMP:9674"/>
        <dbReference type="ChEBI" id="CHEBI:15378"/>
        <dbReference type="ChEBI" id="CHEBI:30616"/>
        <dbReference type="ChEBI" id="CHEBI:33019"/>
        <dbReference type="ChEBI" id="CHEBI:58048"/>
        <dbReference type="ChEBI" id="CHEBI:78442"/>
        <dbReference type="ChEBI" id="CHEBI:78515"/>
        <dbReference type="ChEBI" id="CHEBI:456215"/>
        <dbReference type="EC" id="6.1.1.22"/>
    </reaction>
</comment>
<comment type="subunit">
    <text evidence="1">Homodimer.</text>
</comment>
<comment type="subcellular location">
    <subcellularLocation>
        <location evidence="1">Cytoplasm</location>
    </subcellularLocation>
</comment>
<comment type="similarity">
    <text evidence="1">Belongs to the class-II aminoacyl-tRNA synthetase family.</text>
</comment>